<feature type="signal peptide" evidence="3">
    <location>
        <begin position="1"/>
        <end position="24"/>
    </location>
</feature>
<feature type="propeptide" id="PRO_0000223274" evidence="1">
    <location>
        <begin position="25"/>
        <end position="54"/>
    </location>
</feature>
<feature type="peptide" id="PRO_0000045323" description="Hepcidin">
    <location>
        <begin position="60"/>
        <end position="84"/>
    </location>
</feature>
<feature type="disulfide bond" evidence="1">
    <location>
        <begin position="69"/>
        <end position="72"/>
    </location>
</feature>
<feature type="disulfide bond" evidence="1">
    <location>
        <begin position="70"/>
        <end position="78"/>
    </location>
</feature>
<feature type="disulfide bond" evidence="1">
    <location>
        <begin position="73"/>
        <end position="81"/>
    </location>
</feature>
<protein>
    <recommendedName>
        <fullName>Hepcidin</fullName>
    </recommendedName>
</protein>
<sequence length="84" mass="9374">MALSSQIWAACLLLLLLLASLTSGSVFPQQTGQLAELQPQDRAGARAGWTPMLQRRRRRDTHFPIYIFCCGCCHRSKCGMCCKT</sequence>
<reference key="1">
    <citation type="submission" date="2004-11" db="EMBL/GenBank/DDBJ databases">
        <authorList>
            <consortium name="The German cDNA consortium"/>
        </authorList>
    </citation>
    <scope>NUCLEOTIDE SEQUENCE [LARGE SCALE MRNA]</scope>
    <source>
        <tissue>Liver</tissue>
    </source>
</reference>
<organism>
    <name type="scientific">Pongo abelii</name>
    <name type="common">Sumatran orangutan</name>
    <name type="synonym">Pongo pygmaeus abelii</name>
    <dbReference type="NCBI Taxonomy" id="9601"/>
    <lineage>
        <taxon>Eukaryota</taxon>
        <taxon>Metazoa</taxon>
        <taxon>Chordata</taxon>
        <taxon>Craniata</taxon>
        <taxon>Vertebrata</taxon>
        <taxon>Euteleostomi</taxon>
        <taxon>Mammalia</taxon>
        <taxon>Eutheria</taxon>
        <taxon>Euarchontoglires</taxon>
        <taxon>Primates</taxon>
        <taxon>Haplorrhini</taxon>
        <taxon>Catarrhini</taxon>
        <taxon>Hominidae</taxon>
        <taxon>Pongo</taxon>
    </lineage>
</organism>
<accession>Q5NVR8</accession>
<evidence type="ECO:0000250" key="1"/>
<evidence type="ECO:0000250" key="2">
    <source>
        <dbReference type="UniProtKB" id="P81172"/>
    </source>
</evidence>
<evidence type="ECO:0000255" key="3"/>
<evidence type="ECO:0000305" key="4"/>
<comment type="function">
    <text evidence="2">Liver-produced hormone that constitutes the main circulating regulator of iron absorption and distribution across tissues. Acts by promoting endocytosis and degradation of ferroportin/SLC40A1, leading to the retention of iron in iron-exporting cells and decreased flow of iron into plasma. Controls the major flows of iron into plasma: absorption of dietary iron in the intestine, recycling of iron by macrophages, which phagocytose old erythrocytes and other cells, and mobilization of stored iron from hepatocytes.</text>
</comment>
<comment type="function">
    <text evidence="2">Has strong antimicrobial activity against E.coli ML35P N.cinerea and weaker against S.epidermidis, S.aureus and group b streptococcus bacteria. Active against the fungus C.albicans. No activity against P.aeruginosa.</text>
</comment>
<comment type="subunit">
    <text evidence="2">Interacts with SLC40A1; this interaction promotes SLC40A1 rapid ubiquitination.</text>
</comment>
<comment type="subcellular location">
    <subcellularLocation>
        <location evidence="1">Secreted</location>
    </subcellularLocation>
</comment>
<comment type="similarity">
    <text evidence="4">Belongs to the hepcidin family.</text>
</comment>
<dbReference type="EMBL" id="CR925937">
    <property type="protein sequence ID" value="CAI29595.1"/>
    <property type="molecule type" value="mRNA"/>
</dbReference>
<dbReference type="RefSeq" id="NP_001127676.1">
    <property type="nucleotide sequence ID" value="NM_001134204.2"/>
</dbReference>
<dbReference type="SMR" id="Q5NVR8"/>
<dbReference type="FunCoup" id="Q5NVR8">
    <property type="interactions" value="251"/>
</dbReference>
<dbReference type="STRING" id="9601.ENSPPYP00000011035"/>
<dbReference type="GeneID" id="100174758"/>
<dbReference type="KEGG" id="pon:100174758"/>
<dbReference type="CTD" id="57817"/>
<dbReference type="eggNOG" id="ENOG502T0FU">
    <property type="taxonomic scope" value="Eukaryota"/>
</dbReference>
<dbReference type="InParanoid" id="Q5NVR8"/>
<dbReference type="OrthoDB" id="9428792at2759"/>
<dbReference type="Proteomes" id="UP000001595">
    <property type="component" value="Unplaced"/>
</dbReference>
<dbReference type="GO" id="GO:0005615">
    <property type="term" value="C:extracellular space"/>
    <property type="evidence" value="ECO:0007669"/>
    <property type="project" value="TreeGrafter"/>
</dbReference>
<dbReference type="GO" id="GO:0005179">
    <property type="term" value="F:hormone activity"/>
    <property type="evidence" value="ECO:0007669"/>
    <property type="project" value="UniProtKB-KW"/>
</dbReference>
<dbReference type="GO" id="GO:0042742">
    <property type="term" value="P:defense response to bacterium"/>
    <property type="evidence" value="ECO:0007669"/>
    <property type="project" value="UniProtKB-KW"/>
</dbReference>
<dbReference type="GO" id="GO:0006879">
    <property type="term" value="P:intracellular iron ion homeostasis"/>
    <property type="evidence" value="ECO:0007669"/>
    <property type="project" value="InterPro"/>
</dbReference>
<dbReference type="GO" id="GO:0034760">
    <property type="term" value="P:negative regulation of iron ion transmembrane transport"/>
    <property type="evidence" value="ECO:0007669"/>
    <property type="project" value="TreeGrafter"/>
</dbReference>
<dbReference type="InterPro" id="IPR010500">
    <property type="entry name" value="Hepcidin"/>
</dbReference>
<dbReference type="PANTHER" id="PTHR16877">
    <property type="entry name" value="HEPCIDIN"/>
    <property type="match status" value="1"/>
</dbReference>
<dbReference type="PANTHER" id="PTHR16877:SF0">
    <property type="entry name" value="HEPCIDIN"/>
    <property type="match status" value="1"/>
</dbReference>
<dbReference type="Pfam" id="PF06446">
    <property type="entry name" value="Hepcidin"/>
    <property type="match status" value="1"/>
</dbReference>
<gene>
    <name type="primary">HAMP</name>
    <name type="synonym">HEPC</name>
</gene>
<name>HEPC_PONAB</name>
<keyword id="KW-0044">Antibiotic</keyword>
<keyword id="KW-0929">Antimicrobial</keyword>
<keyword id="KW-0165">Cleavage on pair of basic residues</keyword>
<keyword id="KW-1015">Disulfide bond</keyword>
<keyword id="KW-0372">Hormone</keyword>
<keyword id="KW-1185">Reference proteome</keyword>
<keyword id="KW-0964">Secreted</keyword>
<keyword id="KW-0732">Signal</keyword>
<proteinExistence type="inferred from homology"/>